<accession>B6I3J6</accession>
<dbReference type="EC" id="1.1.1.103" evidence="1"/>
<dbReference type="EMBL" id="AP009240">
    <property type="protein sequence ID" value="BAG79423.1"/>
    <property type="molecule type" value="Genomic_DNA"/>
</dbReference>
<dbReference type="RefSeq" id="WP_000646014.1">
    <property type="nucleotide sequence ID" value="NC_011415.1"/>
</dbReference>
<dbReference type="SMR" id="B6I3J6"/>
<dbReference type="GeneID" id="93778332"/>
<dbReference type="KEGG" id="ecy:ECSE_3899"/>
<dbReference type="HOGENOM" id="CLU_026673_11_0_6"/>
<dbReference type="UniPathway" id="UPA00046">
    <property type="reaction ID" value="UER00505"/>
</dbReference>
<dbReference type="Proteomes" id="UP000008199">
    <property type="component" value="Chromosome"/>
</dbReference>
<dbReference type="GO" id="GO:0005737">
    <property type="term" value="C:cytoplasm"/>
    <property type="evidence" value="ECO:0007669"/>
    <property type="project" value="UniProtKB-SubCell"/>
</dbReference>
<dbReference type="GO" id="GO:0008743">
    <property type="term" value="F:L-threonine 3-dehydrogenase activity"/>
    <property type="evidence" value="ECO:0007669"/>
    <property type="project" value="UniProtKB-UniRule"/>
</dbReference>
<dbReference type="GO" id="GO:0008270">
    <property type="term" value="F:zinc ion binding"/>
    <property type="evidence" value="ECO:0007669"/>
    <property type="project" value="UniProtKB-UniRule"/>
</dbReference>
<dbReference type="GO" id="GO:0019518">
    <property type="term" value="P:L-threonine catabolic process to glycine"/>
    <property type="evidence" value="ECO:0007669"/>
    <property type="project" value="UniProtKB-UniPathway"/>
</dbReference>
<dbReference type="FunFam" id="3.40.50.720:FF:000059">
    <property type="entry name" value="L-threonine 3-dehydrogenase"/>
    <property type="match status" value="1"/>
</dbReference>
<dbReference type="Gene3D" id="3.90.180.10">
    <property type="entry name" value="Medium-chain alcohol dehydrogenases, catalytic domain"/>
    <property type="match status" value="1"/>
</dbReference>
<dbReference type="Gene3D" id="3.40.50.720">
    <property type="entry name" value="NAD(P)-binding Rossmann-like Domain"/>
    <property type="match status" value="1"/>
</dbReference>
<dbReference type="HAMAP" id="MF_00627">
    <property type="entry name" value="Thr_dehydrog"/>
    <property type="match status" value="1"/>
</dbReference>
<dbReference type="InterPro" id="IPR013149">
    <property type="entry name" value="ADH-like_C"/>
</dbReference>
<dbReference type="InterPro" id="IPR013154">
    <property type="entry name" value="ADH-like_N"/>
</dbReference>
<dbReference type="InterPro" id="IPR002328">
    <property type="entry name" value="ADH_Zn_CS"/>
</dbReference>
<dbReference type="InterPro" id="IPR011032">
    <property type="entry name" value="GroES-like_sf"/>
</dbReference>
<dbReference type="InterPro" id="IPR004627">
    <property type="entry name" value="L-Threonine_3-DHase"/>
</dbReference>
<dbReference type="InterPro" id="IPR036291">
    <property type="entry name" value="NAD(P)-bd_dom_sf"/>
</dbReference>
<dbReference type="InterPro" id="IPR020843">
    <property type="entry name" value="PKS_ER"/>
</dbReference>
<dbReference type="InterPro" id="IPR050129">
    <property type="entry name" value="Zn_alcohol_dh"/>
</dbReference>
<dbReference type="NCBIfam" id="NF003808">
    <property type="entry name" value="PRK05396.1"/>
    <property type="match status" value="1"/>
</dbReference>
<dbReference type="NCBIfam" id="TIGR00692">
    <property type="entry name" value="tdh"/>
    <property type="match status" value="1"/>
</dbReference>
<dbReference type="PANTHER" id="PTHR43401">
    <property type="entry name" value="L-THREONINE 3-DEHYDROGENASE"/>
    <property type="match status" value="1"/>
</dbReference>
<dbReference type="PANTHER" id="PTHR43401:SF2">
    <property type="entry name" value="L-THREONINE 3-DEHYDROGENASE"/>
    <property type="match status" value="1"/>
</dbReference>
<dbReference type="Pfam" id="PF08240">
    <property type="entry name" value="ADH_N"/>
    <property type="match status" value="1"/>
</dbReference>
<dbReference type="Pfam" id="PF00107">
    <property type="entry name" value="ADH_zinc_N"/>
    <property type="match status" value="1"/>
</dbReference>
<dbReference type="SMART" id="SM00829">
    <property type="entry name" value="PKS_ER"/>
    <property type="match status" value="1"/>
</dbReference>
<dbReference type="SUPFAM" id="SSF50129">
    <property type="entry name" value="GroES-like"/>
    <property type="match status" value="1"/>
</dbReference>
<dbReference type="SUPFAM" id="SSF51735">
    <property type="entry name" value="NAD(P)-binding Rossmann-fold domains"/>
    <property type="match status" value="1"/>
</dbReference>
<dbReference type="PROSITE" id="PS00059">
    <property type="entry name" value="ADH_ZINC"/>
    <property type="match status" value="1"/>
</dbReference>
<feature type="chain" id="PRO_1000130550" description="L-threonine 3-dehydrogenase">
    <location>
        <begin position="1"/>
        <end position="341"/>
    </location>
</feature>
<feature type="active site" description="Charge relay system" evidence="1">
    <location>
        <position position="40"/>
    </location>
</feature>
<feature type="active site" description="Charge relay system" evidence="1">
    <location>
        <position position="43"/>
    </location>
</feature>
<feature type="binding site" evidence="1">
    <location>
        <position position="38"/>
    </location>
    <ligand>
        <name>Zn(2+)</name>
        <dbReference type="ChEBI" id="CHEBI:29105"/>
        <label>1</label>
        <note>catalytic</note>
    </ligand>
</feature>
<feature type="binding site" evidence="1">
    <location>
        <position position="63"/>
    </location>
    <ligand>
        <name>Zn(2+)</name>
        <dbReference type="ChEBI" id="CHEBI:29105"/>
        <label>1</label>
        <note>catalytic</note>
    </ligand>
</feature>
<feature type="binding site" evidence="1">
    <location>
        <position position="64"/>
    </location>
    <ligand>
        <name>Zn(2+)</name>
        <dbReference type="ChEBI" id="CHEBI:29105"/>
        <label>1</label>
        <note>catalytic</note>
    </ligand>
</feature>
<feature type="binding site" evidence="1">
    <location>
        <position position="93"/>
    </location>
    <ligand>
        <name>Zn(2+)</name>
        <dbReference type="ChEBI" id="CHEBI:29105"/>
        <label>2</label>
    </ligand>
</feature>
<feature type="binding site" evidence="1">
    <location>
        <position position="96"/>
    </location>
    <ligand>
        <name>Zn(2+)</name>
        <dbReference type="ChEBI" id="CHEBI:29105"/>
        <label>2</label>
    </ligand>
</feature>
<feature type="binding site" evidence="1">
    <location>
        <position position="99"/>
    </location>
    <ligand>
        <name>Zn(2+)</name>
        <dbReference type="ChEBI" id="CHEBI:29105"/>
        <label>2</label>
    </ligand>
</feature>
<feature type="binding site" evidence="1">
    <location>
        <position position="107"/>
    </location>
    <ligand>
        <name>Zn(2+)</name>
        <dbReference type="ChEBI" id="CHEBI:29105"/>
        <label>2</label>
    </ligand>
</feature>
<feature type="binding site" evidence="1">
    <location>
        <position position="175"/>
    </location>
    <ligand>
        <name>NAD(+)</name>
        <dbReference type="ChEBI" id="CHEBI:57540"/>
    </ligand>
</feature>
<feature type="binding site" evidence="1">
    <location>
        <position position="195"/>
    </location>
    <ligand>
        <name>NAD(+)</name>
        <dbReference type="ChEBI" id="CHEBI:57540"/>
    </ligand>
</feature>
<feature type="binding site" evidence="1">
    <location>
        <position position="200"/>
    </location>
    <ligand>
        <name>NAD(+)</name>
        <dbReference type="ChEBI" id="CHEBI:57540"/>
    </ligand>
</feature>
<feature type="binding site" evidence="1">
    <location>
        <begin position="262"/>
        <end position="264"/>
    </location>
    <ligand>
        <name>NAD(+)</name>
        <dbReference type="ChEBI" id="CHEBI:57540"/>
    </ligand>
</feature>
<feature type="binding site" evidence="1">
    <location>
        <begin position="286"/>
        <end position="287"/>
    </location>
    <ligand>
        <name>NAD(+)</name>
        <dbReference type="ChEBI" id="CHEBI:57540"/>
    </ligand>
</feature>
<feature type="site" description="Important for catalytic activity for the proton relay mechanism but does not participate directly in the coordination of zinc atom" evidence="1">
    <location>
        <position position="148"/>
    </location>
</feature>
<name>TDH_ECOSE</name>
<comment type="function">
    <text evidence="1">Catalyzes the NAD(+)-dependent oxidation of L-threonine to 2-amino-3-ketobutyrate.</text>
</comment>
<comment type="catalytic activity">
    <reaction evidence="1">
        <text>L-threonine + NAD(+) = (2S)-2-amino-3-oxobutanoate + NADH + H(+)</text>
        <dbReference type="Rhea" id="RHEA:13161"/>
        <dbReference type="ChEBI" id="CHEBI:15378"/>
        <dbReference type="ChEBI" id="CHEBI:57540"/>
        <dbReference type="ChEBI" id="CHEBI:57926"/>
        <dbReference type="ChEBI" id="CHEBI:57945"/>
        <dbReference type="ChEBI" id="CHEBI:78948"/>
        <dbReference type="EC" id="1.1.1.103"/>
    </reaction>
</comment>
<comment type="cofactor">
    <cofactor evidence="1">
        <name>Zn(2+)</name>
        <dbReference type="ChEBI" id="CHEBI:29105"/>
    </cofactor>
    <text evidence="1">Binds 2 Zn(2+) ions per subunit.</text>
</comment>
<comment type="pathway">
    <text evidence="1">Amino-acid degradation; L-threonine degradation via oxydo-reductase pathway; glycine from L-threonine: step 1/2.</text>
</comment>
<comment type="subunit">
    <text evidence="1">Homotetramer.</text>
</comment>
<comment type="subcellular location">
    <subcellularLocation>
        <location evidence="1">Cytoplasm</location>
    </subcellularLocation>
</comment>
<comment type="similarity">
    <text evidence="1">Belongs to the zinc-containing alcohol dehydrogenase family.</text>
</comment>
<keyword id="KW-0963">Cytoplasm</keyword>
<keyword id="KW-0479">Metal-binding</keyword>
<keyword id="KW-0520">NAD</keyword>
<keyword id="KW-0560">Oxidoreductase</keyword>
<keyword id="KW-0862">Zinc</keyword>
<protein>
    <recommendedName>
        <fullName evidence="1">L-threonine 3-dehydrogenase</fullName>
        <shortName evidence="1">TDH</shortName>
        <ecNumber evidence="1">1.1.1.103</ecNumber>
    </recommendedName>
</protein>
<gene>
    <name evidence="1" type="primary">tdh</name>
    <name type="ordered locus">ECSE_3899</name>
</gene>
<sequence>MKALSKLKAEEGIWMTDVPVPELGHNDLLIKIRKTAICGTDVHIYNWDEWSQKTIPVPMVVGHEYVGEVVGIGQEVKGFKIGDRVSGEGHITCGHCRNCRGGRTHLCRNTIGVGVNRPGCFAEYLVIPAFNAFKIPDNISDDLASIFDPFGNAVHTALSFDLVGEDVLVSGAGPIGIMAAAVAKHVGARNVVITDVNEYRLELARKMGITRAVNVAKENLNDVMAELGMTEGFDVGLEMSGAPPAFRTMLDTMNHGGRIAMLGIPPSDMSIDWTKVIFKGLFIKGIYGREMFETWYKMAALIQSGLDLSPIITHRFSIDDFQKGFDAMRSGQSGKVILSWD</sequence>
<organism>
    <name type="scientific">Escherichia coli (strain SE11)</name>
    <dbReference type="NCBI Taxonomy" id="409438"/>
    <lineage>
        <taxon>Bacteria</taxon>
        <taxon>Pseudomonadati</taxon>
        <taxon>Pseudomonadota</taxon>
        <taxon>Gammaproteobacteria</taxon>
        <taxon>Enterobacterales</taxon>
        <taxon>Enterobacteriaceae</taxon>
        <taxon>Escherichia</taxon>
    </lineage>
</organism>
<reference key="1">
    <citation type="journal article" date="2008" name="DNA Res.">
        <title>Complete genome sequence and comparative analysis of the wild-type commensal Escherichia coli strain SE11 isolated from a healthy adult.</title>
        <authorList>
            <person name="Oshima K."/>
            <person name="Toh H."/>
            <person name="Ogura Y."/>
            <person name="Sasamoto H."/>
            <person name="Morita H."/>
            <person name="Park S.-H."/>
            <person name="Ooka T."/>
            <person name="Iyoda S."/>
            <person name="Taylor T.D."/>
            <person name="Hayashi T."/>
            <person name="Itoh K."/>
            <person name="Hattori M."/>
        </authorList>
    </citation>
    <scope>NUCLEOTIDE SEQUENCE [LARGE SCALE GENOMIC DNA]</scope>
    <source>
        <strain>SE11</strain>
    </source>
</reference>
<proteinExistence type="inferred from homology"/>
<evidence type="ECO:0000255" key="1">
    <source>
        <dbReference type="HAMAP-Rule" id="MF_00627"/>
    </source>
</evidence>